<gene>
    <name evidence="3" type="primary">HFB1</name>
    <name type="ORF">SODALDRAFT_334916</name>
</gene>
<feature type="signal peptide" evidence="2">
    <location>
        <begin position="1"/>
        <end position="26"/>
    </location>
</feature>
<feature type="chain" id="PRO_5018250670" description="Class II hydrophobin 1">
    <location>
        <begin position="27"/>
        <end position="99"/>
    </location>
</feature>
<feature type="disulfide bond" evidence="1">
    <location>
        <begin position="31"/>
        <end position="80"/>
    </location>
</feature>
<feature type="disulfide bond" evidence="1">
    <location>
        <begin position="41"/>
        <end position="71"/>
    </location>
</feature>
<feature type="disulfide bond" evidence="1">
    <location>
        <begin position="42"/>
        <end position="54"/>
    </location>
</feature>
<feature type="disulfide bond" evidence="1">
    <location>
        <begin position="81"/>
        <end position="92"/>
    </location>
</feature>
<name>HFB1_SODAK</name>
<keyword id="KW-0134">Cell wall</keyword>
<keyword id="KW-0903">Direct protein sequencing</keyword>
<keyword id="KW-1015">Disulfide bond</keyword>
<keyword id="KW-1185">Reference proteome</keyword>
<keyword id="KW-0964">Secreted</keyword>
<keyword id="KW-0732">Signal</keyword>
<accession>A0A3N2PQC3</accession>
<proteinExistence type="evidence at protein level"/>
<comment type="function">
    <text evidence="2 4">Aerial growth, conidiation, and dispersal of filamentous fungi in the environment rely upon a capability of their secreting small amphipathic proteins called hydrophobins (HPBs) with low sequence identity. Class I can self-assemble into an outermost layer of rodlet bundles on aerial cell surfaces, conferring cellular hydrophobicity that supports fungal growth, development and dispersal; whereas Class II form highly ordered films at water-air interfaces through intermolecular interactions but contribute nothing to the rodlet structure (Probable). HFB1 is a class II hydrophobin that shows antifungal activity against pathogenic and opportunistic fungi such as Cryptococcus neoformans, Nakaseomyces glabrataa, or Candida tropicalis (PubMed:35887416).</text>
</comment>
<comment type="subunit">
    <text evidence="1">Homotetramer (By similarity). Further self-assembles to form highly ordered films at water-air interfaces through intermolecular interactions (By similarity).</text>
</comment>
<comment type="subcellular location">
    <subcellularLocation>
        <location evidence="1">Secreted</location>
        <location evidence="1">Cell wall</location>
    </subcellularLocation>
    <subcellularLocation>
        <location evidence="1">Secreted</location>
    </subcellularLocation>
</comment>
<comment type="biotechnology">
    <text evidence="2">HFB1 is partly responsible for the reported antifungal activity of S.alkalinus, and may serve as a potential source of lead compounds, meaning that it can be developed as an antifungal drug candidate.</text>
</comment>
<comment type="similarity">
    <text evidence="4">Belongs to the cerato-ulmin hydrophobin family.</text>
</comment>
<sequence length="99" mass="10190">MKFIAVVAALTASLAMAAPTESSTDTTYIACPISLYGNAQCCATDILGLANLDCESPTDVPRDAGHFQRTCADVGKRARCCAIPVLGQALLCIQPAGAN</sequence>
<organism>
    <name type="scientific">Sodiomyces alkalinus (strain CBS 110278 / VKM F-3762 / F11)</name>
    <name type="common">Alkaliphilic filamentous fungus</name>
    <dbReference type="NCBI Taxonomy" id="1314773"/>
    <lineage>
        <taxon>Eukaryota</taxon>
        <taxon>Fungi</taxon>
        <taxon>Dikarya</taxon>
        <taxon>Ascomycota</taxon>
        <taxon>Pezizomycotina</taxon>
        <taxon>Sordariomycetes</taxon>
        <taxon>Hypocreomycetidae</taxon>
        <taxon>Glomerellales</taxon>
        <taxon>Plectosphaerellaceae</taxon>
        <taxon>Sodiomyces</taxon>
    </lineage>
</organism>
<reference key="1">
    <citation type="journal article" date="2018" name="Mol. Ecol.">
        <title>The obligate alkalophilic soda-lake fungus Sodiomyces alkalinus has shifted to a protein diet.</title>
        <authorList>
            <person name="Grum-Grzhimaylo A.A."/>
            <person name="Falkoski D.L."/>
            <person name="van den Heuvel J."/>
            <person name="Valero-Jimenez C.A."/>
            <person name="Min B."/>
            <person name="Choi I.G."/>
            <person name="Lipzen A."/>
            <person name="Daum C.G."/>
            <person name="Aanen D.K."/>
            <person name="Tsang A."/>
            <person name="Henrissat B."/>
            <person name="Bilanenko E.N."/>
            <person name="de Vries R.P."/>
            <person name="van Kan J.A.L."/>
            <person name="Grigoriev I.V."/>
            <person name="Debets A.J.M."/>
        </authorList>
    </citation>
    <scope>NUCLEOTIDE SEQUENCE [LARGE SCALE GENOMIC DNA]</scope>
    <source>
        <strain>CBS 110278 / VKM F-3762 / F11</strain>
    </source>
</reference>
<reference key="2">
    <citation type="journal article" date="2022" name="J. Fungi">
        <title>Isolation and Characterization of a Novel Hydrophobin, Sa-HFB1, with Antifungal Activity from an Alkaliphilic Fungus, Sodiomyces alkalinus.</title>
        <authorList>
            <person name="Kuvarina A.E."/>
            <person name="Rogozhin E.A."/>
            <person name="Sykonnikov M.A."/>
            <person name="Timofeeva A.V."/>
            <person name="Serebryakova M.V."/>
            <person name="Fedorova N.V."/>
            <person name="Kokaeva L.Y."/>
            <person name="Efimenko T.A."/>
            <person name="Georgieva M.L."/>
            <person name="Sadykova V.S."/>
        </authorList>
    </citation>
    <scope>PROTEIN SEQUENCE OF 27-36</scope>
    <scope>FUNCTION</scope>
    <scope>BIOTECHNOLOGY</scope>
</reference>
<protein>
    <recommendedName>
        <fullName evidence="3">Class II hydrophobin 1</fullName>
    </recommendedName>
</protein>
<evidence type="ECO:0000250" key="1">
    <source>
        <dbReference type="UniProtKB" id="P79073"/>
    </source>
</evidence>
<evidence type="ECO:0000269" key="2">
    <source>
    </source>
</evidence>
<evidence type="ECO:0000303" key="3">
    <source>
    </source>
</evidence>
<evidence type="ECO:0000305" key="4"/>
<dbReference type="EMBL" id="ML119058">
    <property type="protein sequence ID" value="ROT36721.1"/>
    <property type="molecule type" value="Genomic_DNA"/>
</dbReference>
<dbReference type="RefSeq" id="XP_028464527.1">
    <property type="nucleotide sequence ID" value="XM_028612330.1"/>
</dbReference>
<dbReference type="SMR" id="A0A3N2PQC3"/>
<dbReference type="STRING" id="1314773.A0A3N2PQC3"/>
<dbReference type="GeneID" id="39580808"/>
<dbReference type="OrthoDB" id="4500971at2759"/>
<dbReference type="Proteomes" id="UP000272025">
    <property type="component" value="Unassembled WGS sequence"/>
</dbReference>
<dbReference type="GO" id="GO:0005576">
    <property type="term" value="C:extracellular region"/>
    <property type="evidence" value="ECO:0007669"/>
    <property type="project" value="UniProtKB-KW"/>
</dbReference>
<dbReference type="CDD" id="cd23508">
    <property type="entry name" value="hydrophobin_II"/>
    <property type="match status" value="1"/>
</dbReference>
<dbReference type="Gene3D" id="3.20.120.10">
    <property type="entry name" value="Hydrophobin"/>
    <property type="match status" value="1"/>
</dbReference>
<dbReference type="InterPro" id="IPR010636">
    <property type="entry name" value="Cerato-ulmin_hydrophobin"/>
</dbReference>
<dbReference type="InterPro" id="IPR036686">
    <property type="entry name" value="Hydrophobin_sf"/>
</dbReference>
<dbReference type="PANTHER" id="PTHR42341">
    <property type="entry name" value="HYDROPHOBIN"/>
    <property type="match status" value="1"/>
</dbReference>
<dbReference type="PANTHER" id="PTHR42341:SF1">
    <property type="entry name" value="HYDROPHOBIN"/>
    <property type="match status" value="1"/>
</dbReference>
<dbReference type="Pfam" id="PF06766">
    <property type="entry name" value="Hydrophobin_2"/>
    <property type="match status" value="1"/>
</dbReference>
<dbReference type="SUPFAM" id="SSF101751">
    <property type="entry name" value="Hydrophobin II, HfbII"/>
    <property type="match status" value="1"/>
</dbReference>